<dbReference type="EC" id="2.7.3.2" evidence="1"/>
<dbReference type="EMBL" id="M11660">
    <property type="protein sequence ID" value="AAA30836.1"/>
    <property type="molecule type" value="mRNA"/>
</dbReference>
<dbReference type="PIR" id="A24686">
    <property type="entry name" value="A24686"/>
</dbReference>
<dbReference type="RefSeq" id="NP_001300705.1">
    <property type="nucleotide sequence ID" value="NM_001313776.1"/>
</dbReference>
<dbReference type="SMR" id="P05123"/>
<dbReference type="FunCoup" id="P05123">
    <property type="interactions" value="27"/>
</dbReference>
<dbReference type="STRING" id="9615.ENSCAFP00000041666"/>
<dbReference type="SwissPalm" id="P05123"/>
<dbReference type="PaxDb" id="9612-ENSCAFP00000006727"/>
<dbReference type="Ensembl" id="ENSCAFT00000007262.5">
    <property type="protein sequence ID" value="ENSCAFP00000006727.4"/>
    <property type="gene ID" value="ENSCAFG00000004507.5"/>
</dbReference>
<dbReference type="Ensembl" id="ENSCAFT00030004913.1">
    <property type="protein sequence ID" value="ENSCAFP00030004365.1"/>
    <property type="gene ID" value="ENSCAFG00030002587.1"/>
</dbReference>
<dbReference type="Ensembl" id="ENSCAFT00845010014.1">
    <property type="protein sequence ID" value="ENSCAFP00845007817.1"/>
    <property type="gene ID" value="ENSCAFG00845005622.1"/>
</dbReference>
<dbReference type="GeneID" id="476435"/>
<dbReference type="KEGG" id="cfa:476435"/>
<dbReference type="CTD" id="1158"/>
<dbReference type="VEuPathDB" id="HostDB:ENSCAFG00845005622"/>
<dbReference type="VGNC" id="VGNC:39291">
    <property type="gene designation" value="CKM"/>
</dbReference>
<dbReference type="eggNOG" id="KOG3581">
    <property type="taxonomic scope" value="Eukaryota"/>
</dbReference>
<dbReference type="GeneTree" id="ENSGT00950000182772"/>
<dbReference type="InParanoid" id="P05123"/>
<dbReference type="OrthoDB" id="430219at2759"/>
<dbReference type="Reactome" id="R-CFA-71288">
    <property type="pathway name" value="Creatine metabolism"/>
</dbReference>
<dbReference type="Proteomes" id="UP000002254">
    <property type="component" value="Chromosome 1"/>
</dbReference>
<dbReference type="Proteomes" id="UP000694429">
    <property type="component" value="Chromosome 1"/>
</dbReference>
<dbReference type="Proteomes" id="UP000694542">
    <property type="component" value="Unplaced"/>
</dbReference>
<dbReference type="Proteomes" id="UP000805418">
    <property type="component" value="Chromosome 1"/>
</dbReference>
<dbReference type="Bgee" id="ENSCAFG00000004507">
    <property type="expression patterns" value="Expressed in smooth muscle tissue and 47 other cell types or tissues"/>
</dbReference>
<dbReference type="GO" id="GO:0005737">
    <property type="term" value="C:cytoplasm"/>
    <property type="evidence" value="ECO:0007669"/>
    <property type="project" value="UniProtKB-SubCell"/>
</dbReference>
<dbReference type="GO" id="GO:0005615">
    <property type="term" value="C:extracellular space"/>
    <property type="evidence" value="ECO:0000250"/>
    <property type="project" value="AgBase"/>
</dbReference>
<dbReference type="GO" id="GO:0005524">
    <property type="term" value="F:ATP binding"/>
    <property type="evidence" value="ECO:0007669"/>
    <property type="project" value="UniProtKB-KW"/>
</dbReference>
<dbReference type="GO" id="GO:0004111">
    <property type="term" value="F:creatine kinase activity"/>
    <property type="evidence" value="ECO:0000250"/>
    <property type="project" value="AgBase"/>
</dbReference>
<dbReference type="GO" id="GO:0046314">
    <property type="term" value="P:phosphocreatine biosynthetic process"/>
    <property type="evidence" value="ECO:0000318"/>
    <property type="project" value="GO_Central"/>
</dbReference>
<dbReference type="GO" id="GO:0009408">
    <property type="term" value="P:response to heat"/>
    <property type="evidence" value="ECO:0000250"/>
    <property type="project" value="AgBase"/>
</dbReference>
<dbReference type="CDD" id="cd00716">
    <property type="entry name" value="creatine_kinase_like"/>
    <property type="match status" value="1"/>
</dbReference>
<dbReference type="FunFam" id="3.30.590.10:FF:000026">
    <property type="entry name" value="Creatine kinase B-type"/>
    <property type="match status" value="1"/>
</dbReference>
<dbReference type="FunFam" id="1.10.135.10:FF:000001">
    <property type="entry name" value="Creatine kinase M-type"/>
    <property type="match status" value="1"/>
</dbReference>
<dbReference type="Gene3D" id="1.10.135.10">
    <property type="entry name" value="ATP:guanido phosphotransferase, N-terminal domain"/>
    <property type="match status" value="1"/>
</dbReference>
<dbReference type="Gene3D" id="3.30.590.10">
    <property type="entry name" value="Glutamine synthetase/guanido kinase, catalytic domain"/>
    <property type="match status" value="1"/>
</dbReference>
<dbReference type="InterPro" id="IPR000749">
    <property type="entry name" value="ATP-guanido_PTrfase"/>
</dbReference>
<dbReference type="InterPro" id="IPR022415">
    <property type="entry name" value="ATP-guanido_PTrfase_AS"/>
</dbReference>
<dbReference type="InterPro" id="IPR022414">
    <property type="entry name" value="ATP-guanido_PTrfase_cat"/>
</dbReference>
<dbReference type="InterPro" id="IPR022413">
    <property type="entry name" value="ATP-guanido_PTrfase_N"/>
</dbReference>
<dbReference type="InterPro" id="IPR036802">
    <property type="entry name" value="ATP-guanido_PTrfase_N_sf"/>
</dbReference>
<dbReference type="InterPro" id="IPR014746">
    <property type="entry name" value="Gln_synth/guanido_kin_cat_dom"/>
</dbReference>
<dbReference type="PANTHER" id="PTHR11547">
    <property type="entry name" value="ARGININE OR CREATINE KINASE"/>
    <property type="match status" value="1"/>
</dbReference>
<dbReference type="PANTHER" id="PTHR11547:SF63">
    <property type="entry name" value="CREATINE KINASE M-TYPE"/>
    <property type="match status" value="1"/>
</dbReference>
<dbReference type="Pfam" id="PF00217">
    <property type="entry name" value="ATP-gua_Ptrans"/>
    <property type="match status" value="1"/>
</dbReference>
<dbReference type="Pfam" id="PF02807">
    <property type="entry name" value="ATP-gua_PtransN"/>
    <property type="match status" value="1"/>
</dbReference>
<dbReference type="SUPFAM" id="SSF55931">
    <property type="entry name" value="Glutamine synthetase/guanido kinase"/>
    <property type="match status" value="1"/>
</dbReference>
<dbReference type="SUPFAM" id="SSF48034">
    <property type="entry name" value="Guanido kinase N-terminal domain"/>
    <property type="match status" value="1"/>
</dbReference>
<dbReference type="PROSITE" id="PS00112">
    <property type="entry name" value="PHOSPHAGEN_KINASE"/>
    <property type="match status" value="1"/>
</dbReference>
<dbReference type="PROSITE" id="PS51510">
    <property type="entry name" value="PHOSPHAGEN_KINASE_C"/>
    <property type="match status" value="1"/>
</dbReference>
<dbReference type="PROSITE" id="PS51509">
    <property type="entry name" value="PHOSPHAGEN_KINASE_N"/>
    <property type="match status" value="1"/>
</dbReference>
<reference key="1">
    <citation type="journal article" date="1985" name="Proc. Natl. Acad. Sci. U.S.A.">
        <title>Complete nucleotide sequence of dog heart creatine kinase mRNA: conservation of amino acid sequence within and among species.</title>
        <authorList>
            <person name="Roman D.G."/>
            <person name="Billadello J.J."/>
            <person name="Gordon J."/>
            <person name="Grace A."/>
            <person name="Sobel B."/>
            <person name="Strauss A.W."/>
        </authorList>
    </citation>
    <scope>NUCLEOTIDE SEQUENCE [MRNA]</scope>
    <source>
        <tissue>Heart</tissue>
    </source>
</reference>
<reference key="2">
    <citation type="journal article" date="1997" name="Electrophoresis">
        <title>HSC-2DPAGE and the two-dimensional gel electrophoresis database of dog heart proteins.</title>
        <authorList>
            <person name="Dunn M.J."/>
            <person name="Corbett J.M."/>
            <person name="Wheeler C.H."/>
        </authorList>
    </citation>
    <scope>PROTEIN SEQUENCE OF 2-23</scope>
    <source>
        <tissue>Heart</tissue>
    </source>
</reference>
<reference key="3">
    <citation type="journal article" date="1989" name="J. Clin. Invest.">
        <title>Characterization of MB creatine kinase isoform conversion in vitro and in vivo in dogs.</title>
        <authorList>
            <person name="Billadello J.J."/>
            <person name="Fontanet H.L."/>
            <person name="Strauss A.W."/>
            <person name="Abendschein D.R."/>
        </authorList>
    </citation>
    <scope>PROTEIN SEQUENCE OF 377-381</scope>
    <source>
        <tissue>Myocardium</tissue>
    </source>
</reference>
<comment type="function">
    <text evidence="1">Reversibly catalyzes the transfer of phosphate between ATP and various phosphogens (e.g. creatine phosphate). Creatine kinase isoenzymes play a central role in energy transduction in tissues with large, fluctuating energy demands, such as skeletal muscle, heart, brain and spermatozoa.</text>
</comment>
<comment type="catalytic activity">
    <reaction evidence="1 7">
        <text>creatine + ATP = N-phosphocreatine + ADP + H(+)</text>
        <dbReference type="Rhea" id="RHEA:17157"/>
        <dbReference type="ChEBI" id="CHEBI:15378"/>
        <dbReference type="ChEBI" id="CHEBI:30616"/>
        <dbReference type="ChEBI" id="CHEBI:57947"/>
        <dbReference type="ChEBI" id="CHEBI:58092"/>
        <dbReference type="ChEBI" id="CHEBI:456216"/>
        <dbReference type="EC" id="2.7.3.2"/>
    </reaction>
</comment>
<comment type="subunit">
    <text evidence="4">Dimer of identical or non-identical chains, which can be either B (brain type) or M (muscle type). With MM being the major form in skeletal muscle and myocardium, MB existing in myocardium, and BB existing in many tissues, especially brain.</text>
</comment>
<comment type="subcellular location">
    <subcellularLocation>
        <location>Cytoplasm</location>
    </subcellularLocation>
</comment>
<comment type="similarity">
    <text evidence="5 6">Belongs to the ATP:guanido phosphotransferase family.</text>
</comment>
<organism>
    <name type="scientific">Canis lupus familiaris</name>
    <name type="common">Dog</name>
    <name type="synonym">Canis familiaris</name>
    <dbReference type="NCBI Taxonomy" id="9615"/>
    <lineage>
        <taxon>Eukaryota</taxon>
        <taxon>Metazoa</taxon>
        <taxon>Chordata</taxon>
        <taxon>Craniata</taxon>
        <taxon>Vertebrata</taxon>
        <taxon>Euteleostomi</taxon>
        <taxon>Mammalia</taxon>
        <taxon>Eutheria</taxon>
        <taxon>Laurasiatheria</taxon>
        <taxon>Carnivora</taxon>
        <taxon>Caniformia</taxon>
        <taxon>Canidae</taxon>
        <taxon>Canis</taxon>
    </lineage>
</organism>
<sequence>MPFGNTHNKFKLNYKPEEEYPDLTKHNNHMAKALTPEIYKKLRDKETPSGFTLDDVIQTGVDNPGHPFIMTVGCVAGDEESYQVFKDLFDPIIQDRHGGYKPTDKHKTDLNHENLKGGDDLDPNYVLSSRVRTGRSIKGYTLPPHCSRGERRAVEKLSIEALNSLTGEFKGKYYPLKSMTEQEQQQLIDDHFLFDKPVSPLLLASGMARDWPDARGIWHNDNKTFLVWVNEEDHLRVISMQKGGNMKEVFRRFCVGLQKIEEIFKKAGHPFMWNEHLGYVLTCPSNLGTGLRGGVHVKLAHLSKHPKFEEILTRLRLQKRGTGGVDTAAVGSVFDISNADRLGSSEVEQVQLVVDGVKLMVEMEKKLEKGQSIDDMIPAQK</sequence>
<name>KCRM_CANLF</name>
<gene>
    <name type="primary">CKM</name>
</gene>
<protein>
    <recommendedName>
        <fullName>Creatine kinase M-type</fullName>
        <ecNumber evidence="1">2.7.3.2</ecNumber>
    </recommendedName>
    <alternativeName>
        <fullName>Creatine kinase M chain</fullName>
    </alternativeName>
    <alternativeName>
        <fullName>Creatine phosphokinase M-type</fullName>
        <shortName>CPK-M</shortName>
    </alternativeName>
    <alternativeName>
        <fullName>M-CK</fullName>
    </alternativeName>
</protein>
<accession>P05123</accession>
<proteinExistence type="evidence at protein level"/>
<feature type="initiator methionine" description="Removed" evidence="8">
    <location>
        <position position="1"/>
    </location>
</feature>
<feature type="chain" id="PRO_0000211974" description="Creatine kinase M-type">
    <location>
        <begin position="2"/>
        <end position="381"/>
    </location>
</feature>
<feature type="domain" description="Phosphagen kinase N-terminal" evidence="5">
    <location>
        <begin position="11"/>
        <end position="98"/>
    </location>
</feature>
<feature type="domain" description="Phosphagen kinase C-terminal" evidence="6">
    <location>
        <begin position="125"/>
        <end position="367"/>
    </location>
</feature>
<feature type="binding site" evidence="6">
    <location>
        <begin position="128"/>
        <end position="132"/>
    </location>
    <ligand>
        <name>ATP</name>
        <dbReference type="ChEBI" id="CHEBI:30616"/>
    </ligand>
</feature>
<feature type="binding site" evidence="6">
    <location>
        <position position="191"/>
    </location>
    <ligand>
        <name>ATP</name>
        <dbReference type="ChEBI" id="CHEBI:30616"/>
    </ligand>
</feature>
<feature type="binding site" evidence="6">
    <location>
        <position position="236"/>
    </location>
    <ligand>
        <name>ATP</name>
        <dbReference type="ChEBI" id="CHEBI:30616"/>
    </ligand>
</feature>
<feature type="binding site" evidence="6">
    <location>
        <position position="292"/>
    </location>
    <ligand>
        <name>ATP</name>
        <dbReference type="ChEBI" id="CHEBI:30616"/>
    </ligand>
</feature>
<feature type="binding site" evidence="6">
    <location>
        <begin position="320"/>
        <end position="325"/>
    </location>
    <ligand>
        <name>ATP</name>
        <dbReference type="ChEBI" id="CHEBI:30616"/>
    </ligand>
</feature>
<feature type="binding site" evidence="6">
    <location>
        <position position="335"/>
    </location>
    <ligand>
        <name>ATP</name>
        <dbReference type="ChEBI" id="CHEBI:30616"/>
    </ligand>
</feature>
<feature type="modified residue" description="Phosphoserine" evidence="3">
    <location>
        <position position="164"/>
    </location>
</feature>
<feature type="modified residue" description="Phosphothreonine" evidence="2">
    <location>
        <position position="166"/>
    </location>
</feature>
<feature type="modified residue" description="Phosphoserine" evidence="2">
    <location>
        <position position="178"/>
    </location>
</feature>
<feature type="modified residue" description="Phosphothreonine" evidence="2">
    <location>
        <position position="180"/>
    </location>
</feature>
<feature type="modified residue" description="Phosphoserine" evidence="3">
    <location>
        <position position="199"/>
    </location>
</feature>
<feature type="modified residue" description="Phosphothreonine" evidence="2">
    <location>
        <position position="313"/>
    </location>
</feature>
<feature type="modified residue" description="Phosphothreonine" evidence="3">
    <location>
        <position position="322"/>
    </location>
</feature>
<feature type="modified residue" description="Phosphoserine" evidence="3">
    <location>
        <position position="372"/>
    </location>
</feature>
<keyword id="KW-0067">ATP-binding</keyword>
<keyword id="KW-0963">Cytoplasm</keyword>
<keyword id="KW-0903">Direct protein sequencing</keyword>
<keyword id="KW-0418">Kinase</keyword>
<keyword id="KW-0547">Nucleotide-binding</keyword>
<keyword id="KW-0597">Phosphoprotein</keyword>
<keyword id="KW-1185">Reference proteome</keyword>
<keyword id="KW-0808">Transferase</keyword>
<evidence type="ECO:0000250" key="1">
    <source>
        <dbReference type="UniProtKB" id="P00563"/>
    </source>
</evidence>
<evidence type="ECO:0000250" key="2">
    <source>
        <dbReference type="UniProtKB" id="P00564"/>
    </source>
</evidence>
<evidence type="ECO:0000250" key="3">
    <source>
        <dbReference type="UniProtKB" id="P07310"/>
    </source>
</evidence>
<evidence type="ECO:0000250" key="4">
    <source>
        <dbReference type="UniProtKB" id="P12277"/>
    </source>
</evidence>
<evidence type="ECO:0000255" key="5">
    <source>
        <dbReference type="PROSITE-ProRule" id="PRU00842"/>
    </source>
</evidence>
<evidence type="ECO:0000255" key="6">
    <source>
        <dbReference type="PROSITE-ProRule" id="PRU00843"/>
    </source>
</evidence>
<evidence type="ECO:0000255" key="7">
    <source>
        <dbReference type="PROSITE-ProRule" id="PRU10029"/>
    </source>
</evidence>
<evidence type="ECO:0000269" key="8">
    <source>
    </source>
</evidence>